<gene>
    <name type="primary">UBC5</name>
    <name type="ordered locus">At1g63800</name>
    <name type="ORF">F24D7.1</name>
    <name type="ORF">T12P18.18</name>
</gene>
<feature type="chain" id="PRO_0000082583" description="Ubiquitin-conjugating enzyme E2 5">
    <location>
        <begin position="1"/>
        <end position="185"/>
    </location>
</feature>
<feature type="domain" description="UBC core" evidence="1">
    <location>
        <begin position="1"/>
        <end position="148"/>
    </location>
</feature>
<feature type="region of interest" description="Disordered" evidence="3">
    <location>
        <begin position="146"/>
        <end position="185"/>
    </location>
</feature>
<feature type="compositionally biased region" description="Acidic residues" evidence="3">
    <location>
        <begin position="154"/>
        <end position="177"/>
    </location>
</feature>
<feature type="active site" description="Glycyl thioester intermediate" evidence="1 2">
    <location>
        <position position="85"/>
    </location>
</feature>
<feature type="sequence conflict" description="In Ref. 1; AAA32902." evidence="6" ref="1">
    <original>A</original>
    <variation>R</variation>
    <location>
        <position position="178"/>
    </location>
</feature>
<reference key="1">
    <citation type="journal article" date="1994" name="Plant Mol. Biol.">
        <title>Homologues of wheat ubiquitin-conjugating enzymes -- TaUBC1 and TaUBC4 are encoded by small multigene families in Arabidopsis thaliana.</title>
        <authorList>
            <person name="Sullivan M.L."/>
            <person name="Carpenter T.B."/>
            <person name="Vierstra R.D."/>
        </authorList>
    </citation>
    <scope>NUCLEOTIDE SEQUENCE [GENOMIC DNA]</scope>
    <source>
        <strain>cv. Columbia</strain>
        <tissue>Green leaf</tissue>
    </source>
</reference>
<reference key="2">
    <citation type="journal article" date="2005" name="Plant Physiol.">
        <title>Genome analysis and functional characterization of the E2 and RING-type E3 ligase ubiquitination enzymes of Arabidopsis.</title>
        <authorList>
            <person name="Kraft E."/>
            <person name="Stone S.L."/>
            <person name="Ma L."/>
            <person name="Su N."/>
            <person name="Gao Y."/>
            <person name="Lau O.-S."/>
            <person name="Deng X.-W."/>
            <person name="Callis J."/>
        </authorList>
    </citation>
    <scope>NUCLEOTIDE SEQUENCE [MRNA]</scope>
    <scope>FUNCTION</scope>
    <scope>GENE FAMILY</scope>
    <scope>NOMENCLATURE</scope>
</reference>
<reference key="3">
    <citation type="journal article" date="2000" name="Nature">
        <title>Sequence and analysis of chromosome 1 of the plant Arabidopsis thaliana.</title>
        <authorList>
            <person name="Theologis A."/>
            <person name="Ecker J.R."/>
            <person name="Palm C.J."/>
            <person name="Federspiel N.A."/>
            <person name="Kaul S."/>
            <person name="White O."/>
            <person name="Alonso J."/>
            <person name="Altafi H."/>
            <person name="Araujo R."/>
            <person name="Bowman C.L."/>
            <person name="Brooks S.Y."/>
            <person name="Buehler E."/>
            <person name="Chan A."/>
            <person name="Chao Q."/>
            <person name="Chen H."/>
            <person name="Cheuk R.F."/>
            <person name="Chin C.W."/>
            <person name="Chung M.K."/>
            <person name="Conn L."/>
            <person name="Conway A.B."/>
            <person name="Conway A.R."/>
            <person name="Creasy T.H."/>
            <person name="Dewar K."/>
            <person name="Dunn P."/>
            <person name="Etgu P."/>
            <person name="Feldblyum T.V."/>
            <person name="Feng J.-D."/>
            <person name="Fong B."/>
            <person name="Fujii C.Y."/>
            <person name="Gill J.E."/>
            <person name="Goldsmith A.D."/>
            <person name="Haas B."/>
            <person name="Hansen N.F."/>
            <person name="Hughes B."/>
            <person name="Huizar L."/>
            <person name="Hunter J.L."/>
            <person name="Jenkins J."/>
            <person name="Johnson-Hopson C."/>
            <person name="Khan S."/>
            <person name="Khaykin E."/>
            <person name="Kim C.J."/>
            <person name="Koo H.L."/>
            <person name="Kremenetskaia I."/>
            <person name="Kurtz D.B."/>
            <person name="Kwan A."/>
            <person name="Lam B."/>
            <person name="Langin-Hooper S."/>
            <person name="Lee A."/>
            <person name="Lee J.M."/>
            <person name="Lenz C.A."/>
            <person name="Li J.H."/>
            <person name="Li Y.-P."/>
            <person name="Lin X."/>
            <person name="Liu S.X."/>
            <person name="Liu Z.A."/>
            <person name="Luros J.S."/>
            <person name="Maiti R."/>
            <person name="Marziali A."/>
            <person name="Militscher J."/>
            <person name="Miranda M."/>
            <person name="Nguyen M."/>
            <person name="Nierman W.C."/>
            <person name="Osborne B.I."/>
            <person name="Pai G."/>
            <person name="Peterson J."/>
            <person name="Pham P.K."/>
            <person name="Rizzo M."/>
            <person name="Rooney T."/>
            <person name="Rowley D."/>
            <person name="Sakano H."/>
            <person name="Salzberg S.L."/>
            <person name="Schwartz J.R."/>
            <person name="Shinn P."/>
            <person name="Southwick A.M."/>
            <person name="Sun H."/>
            <person name="Tallon L.J."/>
            <person name="Tambunga G."/>
            <person name="Toriumi M.J."/>
            <person name="Town C.D."/>
            <person name="Utterback T."/>
            <person name="Van Aken S."/>
            <person name="Vaysberg M."/>
            <person name="Vysotskaia V.S."/>
            <person name="Walker M."/>
            <person name="Wu D."/>
            <person name="Yu G."/>
            <person name="Fraser C.M."/>
            <person name="Venter J.C."/>
            <person name="Davis R.W."/>
        </authorList>
    </citation>
    <scope>NUCLEOTIDE SEQUENCE [LARGE SCALE GENOMIC DNA]</scope>
    <source>
        <strain>cv. Columbia</strain>
    </source>
</reference>
<reference key="4">
    <citation type="journal article" date="2017" name="Plant J.">
        <title>Araport11: a complete reannotation of the Arabidopsis thaliana reference genome.</title>
        <authorList>
            <person name="Cheng C.Y."/>
            <person name="Krishnakumar V."/>
            <person name="Chan A.P."/>
            <person name="Thibaud-Nissen F."/>
            <person name="Schobel S."/>
            <person name="Town C.D."/>
        </authorList>
    </citation>
    <scope>GENOME REANNOTATION</scope>
    <source>
        <strain>cv. Columbia</strain>
    </source>
</reference>
<reference key="5">
    <citation type="journal article" date="2003" name="Science">
        <title>Empirical analysis of transcriptional activity in the Arabidopsis genome.</title>
        <authorList>
            <person name="Yamada K."/>
            <person name="Lim J."/>
            <person name="Dale J.M."/>
            <person name="Chen H."/>
            <person name="Shinn P."/>
            <person name="Palm C.J."/>
            <person name="Southwick A.M."/>
            <person name="Wu H.C."/>
            <person name="Kim C.J."/>
            <person name="Nguyen M."/>
            <person name="Pham P.K."/>
            <person name="Cheuk R.F."/>
            <person name="Karlin-Newmann G."/>
            <person name="Liu S.X."/>
            <person name="Lam B."/>
            <person name="Sakano H."/>
            <person name="Wu T."/>
            <person name="Yu G."/>
            <person name="Miranda M."/>
            <person name="Quach H.L."/>
            <person name="Tripp M."/>
            <person name="Chang C.H."/>
            <person name="Lee J.M."/>
            <person name="Toriumi M.J."/>
            <person name="Chan M.M."/>
            <person name="Tang C.C."/>
            <person name="Onodera C.S."/>
            <person name="Deng J.M."/>
            <person name="Akiyama K."/>
            <person name="Ansari Y."/>
            <person name="Arakawa T."/>
            <person name="Banh J."/>
            <person name="Banno F."/>
            <person name="Bowser L."/>
            <person name="Brooks S.Y."/>
            <person name="Carninci P."/>
            <person name="Chao Q."/>
            <person name="Choy N."/>
            <person name="Enju A."/>
            <person name="Goldsmith A.D."/>
            <person name="Gurjal M."/>
            <person name="Hansen N.F."/>
            <person name="Hayashizaki Y."/>
            <person name="Johnson-Hopson C."/>
            <person name="Hsuan V.W."/>
            <person name="Iida K."/>
            <person name="Karnes M."/>
            <person name="Khan S."/>
            <person name="Koesema E."/>
            <person name="Ishida J."/>
            <person name="Jiang P.X."/>
            <person name="Jones T."/>
            <person name="Kawai J."/>
            <person name="Kamiya A."/>
            <person name="Meyers C."/>
            <person name="Nakajima M."/>
            <person name="Narusaka M."/>
            <person name="Seki M."/>
            <person name="Sakurai T."/>
            <person name="Satou M."/>
            <person name="Tamse R."/>
            <person name="Vaysberg M."/>
            <person name="Wallender E.K."/>
            <person name="Wong C."/>
            <person name="Yamamura Y."/>
            <person name="Yuan S."/>
            <person name="Shinozaki K."/>
            <person name="Davis R.W."/>
            <person name="Theologis A."/>
            <person name="Ecker J.R."/>
        </authorList>
    </citation>
    <scope>NUCLEOTIDE SEQUENCE [LARGE SCALE MRNA]</scope>
    <source>
        <strain>cv. Columbia</strain>
    </source>
</reference>
<reference key="6">
    <citation type="submission" date="2006-07" db="EMBL/GenBank/DDBJ databases">
        <title>Large-scale analysis of RIKEN Arabidopsis full-length (RAFL) cDNAs.</title>
        <authorList>
            <person name="Totoki Y."/>
            <person name="Seki M."/>
            <person name="Ishida J."/>
            <person name="Nakajima M."/>
            <person name="Enju A."/>
            <person name="Kamiya A."/>
            <person name="Narusaka M."/>
            <person name="Shin-i T."/>
            <person name="Nakagawa M."/>
            <person name="Sakamoto N."/>
            <person name="Oishi K."/>
            <person name="Kohara Y."/>
            <person name="Kobayashi M."/>
            <person name="Toyoda A."/>
            <person name="Sakaki Y."/>
            <person name="Sakurai T."/>
            <person name="Iida K."/>
            <person name="Akiyama K."/>
            <person name="Satou M."/>
            <person name="Toyoda T."/>
            <person name="Konagaya A."/>
            <person name="Carninci P."/>
            <person name="Kawai J."/>
            <person name="Hayashizaki Y."/>
            <person name="Shinozaki K."/>
        </authorList>
    </citation>
    <scope>NUCLEOTIDE SEQUENCE [LARGE SCALE MRNA]</scope>
    <source>
        <strain>cv. Columbia</strain>
    </source>
</reference>
<reference key="7">
    <citation type="journal article" date="1996" name="Plant Mol. Biol.">
        <title>Members of two gene families encoding ubiquitin-conjugating enzymes, AtUBC1-3 and AtUBC4-6, from Arabidopsis thaliana are differentially expressed.</title>
        <authorList>
            <person name="Thoma S."/>
            <person name="Sullivan M.L."/>
            <person name="Vierstra R.D."/>
        </authorList>
    </citation>
    <scope>TISSUE SPECIFICITY</scope>
    <scope>INDUCTION</scope>
</reference>
<accession>P42749</accession>
<accession>Q4TZ04</accession>
<accession>Q8VXY5</accession>
<accession>Q9CAE2</accession>
<accession>Q9CAJ4</accession>
<protein>
    <recommendedName>
        <fullName>Ubiquitin-conjugating enzyme E2 5</fullName>
        <ecNumber>2.3.2.23</ecNumber>
    </recommendedName>
    <alternativeName>
        <fullName>E2 ubiquitin-conjugating enzyme 5</fullName>
    </alternativeName>
    <alternativeName>
        <fullName>Ubiquitin carrier protein 5</fullName>
    </alternativeName>
    <alternativeName>
        <fullName>Ubiquitin-conjugating enzyme E2-21 kDa 2</fullName>
    </alternativeName>
    <alternativeName>
        <fullName>Ubiquitin-protein ligase 5</fullName>
    </alternativeName>
</protein>
<name>UBC5_ARATH</name>
<evidence type="ECO:0000255" key="1">
    <source>
        <dbReference type="PROSITE-ProRule" id="PRU00388"/>
    </source>
</evidence>
<evidence type="ECO:0000255" key="2">
    <source>
        <dbReference type="PROSITE-ProRule" id="PRU10133"/>
    </source>
</evidence>
<evidence type="ECO:0000256" key="3">
    <source>
        <dbReference type="SAM" id="MobiDB-lite"/>
    </source>
</evidence>
<evidence type="ECO:0000269" key="4">
    <source>
    </source>
</evidence>
<evidence type="ECO:0000269" key="5">
    <source>
    </source>
</evidence>
<evidence type="ECO:0000305" key="6"/>
<dbReference type="EC" id="2.3.2.23"/>
<dbReference type="EMBL" id="L19356">
    <property type="protein sequence ID" value="AAA32902.1"/>
    <property type="molecule type" value="Genomic_DNA"/>
</dbReference>
<dbReference type="EMBL" id="DQ027020">
    <property type="protein sequence ID" value="AAY44846.1"/>
    <property type="molecule type" value="mRNA"/>
</dbReference>
<dbReference type="EMBL" id="AC010852">
    <property type="protein sequence ID" value="AAG52444.1"/>
    <property type="molecule type" value="Genomic_DNA"/>
</dbReference>
<dbReference type="EMBL" id="AC011622">
    <property type="protein sequence ID" value="AAG52422.1"/>
    <property type="molecule type" value="Genomic_DNA"/>
</dbReference>
<dbReference type="EMBL" id="CP002684">
    <property type="protein sequence ID" value="AEE34149.1"/>
    <property type="molecule type" value="Genomic_DNA"/>
</dbReference>
<dbReference type="EMBL" id="AY074347">
    <property type="protein sequence ID" value="AAL67043.1"/>
    <property type="molecule type" value="mRNA"/>
</dbReference>
<dbReference type="EMBL" id="AY114061">
    <property type="protein sequence ID" value="AAM45109.1"/>
    <property type="molecule type" value="mRNA"/>
</dbReference>
<dbReference type="EMBL" id="AK230439">
    <property type="protein sequence ID" value="BAF02237.1"/>
    <property type="molecule type" value="mRNA"/>
</dbReference>
<dbReference type="PIR" id="A96663">
    <property type="entry name" value="A96663"/>
</dbReference>
<dbReference type="PIR" id="S43786">
    <property type="entry name" value="S43786"/>
</dbReference>
<dbReference type="RefSeq" id="NP_001321725.1">
    <property type="nucleotide sequence ID" value="NM_001334127.1"/>
</dbReference>
<dbReference type="RefSeq" id="NP_564817.2">
    <property type="nucleotide sequence ID" value="NM_105055.3"/>
</dbReference>
<dbReference type="SMR" id="P42749"/>
<dbReference type="BioGRID" id="27904">
    <property type="interactions" value="1"/>
</dbReference>
<dbReference type="FunCoup" id="P42749">
    <property type="interactions" value="3480"/>
</dbReference>
<dbReference type="IntAct" id="P42749">
    <property type="interactions" value="1"/>
</dbReference>
<dbReference type="STRING" id="3702.P42749"/>
<dbReference type="PaxDb" id="3702-AT1G63800.1"/>
<dbReference type="ProteomicsDB" id="228658"/>
<dbReference type="EnsemblPlants" id="AT1G63800.1">
    <property type="protein sequence ID" value="AT1G63800.1"/>
    <property type="gene ID" value="AT1G63800"/>
</dbReference>
<dbReference type="GeneID" id="842683"/>
<dbReference type="Gramene" id="AT1G63800.1">
    <property type="protein sequence ID" value="AT1G63800.1"/>
    <property type="gene ID" value="AT1G63800"/>
</dbReference>
<dbReference type="KEGG" id="ath:AT1G63800"/>
<dbReference type="Araport" id="AT1G63800"/>
<dbReference type="TAIR" id="AT1G63800">
    <property type="gene designation" value="UBC5"/>
</dbReference>
<dbReference type="eggNOG" id="KOG0416">
    <property type="taxonomic scope" value="Eukaryota"/>
</dbReference>
<dbReference type="HOGENOM" id="CLU_030988_7_1_1"/>
<dbReference type="InParanoid" id="P42749"/>
<dbReference type="PhylomeDB" id="P42749"/>
<dbReference type="UniPathway" id="UPA00143"/>
<dbReference type="PRO" id="PR:P42749"/>
<dbReference type="Proteomes" id="UP000006548">
    <property type="component" value="Chromosome 1"/>
</dbReference>
<dbReference type="ExpressionAtlas" id="P42749">
    <property type="expression patterns" value="baseline and differential"/>
</dbReference>
<dbReference type="GO" id="GO:0005524">
    <property type="term" value="F:ATP binding"/>
    <property type="evidence" value="ECO:0007669"/>
    <property type="project" value="UniProtKB-KW"/>
</dbReference>
<dbReference type="GO" id="GO:0061631">
    <property type="term" value="F:ubiquitin conjugating enzyme activity"/>
    <property type="evidence" value="ECO:0007669"/>
    <property type="project" value="UniProtKB-EC"/>
</dbReference>
<dbReference type="GO" id="GO:0004842">
    <property type="term" value="F:ubiquitin-protein transferase activity"/>
    <property type="evidence" value="ECO:0000314"/>
    <property type="project" value="TAIR"/>
</dbReference>
<dbReference type="GO" id="GO:0016567">
    <property type="term" value="P:protein ubiquitination"/>
    <property type="evidence" value="ECO:0007669"/>
    <property type="project" value="UniProtKB-UniPathway"/>
</dbReference>
<dbReference type="GO" id="GO:0006511">
    <property type="term" value="P:ubiquitin-dependent protein catabolic process"/>
    <property type="evidence" value="ECO:0000314"/>
    <property type="project" value="TAIR"/>
</dbReference>
<dbReference type="CDD" id="cd23797">
    <property type="entry name" value="UBCc_UBE2H"/>
    <property type="match status" value="1"/>
</dbReference>
<dbReference type="FunFam" id="3.10.110.10:FF:000024">
    <property type="entry name" value="Ubiquitin-conjugating enzyme 5, E2"/>
    <property type="match status" value="1"/>
</dbReference>
<dbReference type="Gene3D" id="3.10.110.10">
    <property type="entry name" value="Ubiquitin Conjugating Enzyme"/>
    <property type="match status" value="1"/>
</dbReference>
<dbReference type="InterPro" id="IPR000608">
    <property type="entry name" value="UBQ-conjugat_E2_core"/>
</dbReference>
<dbReference type="InterPro" id="IPR023313">
    <property type="entry name" value="UBQ-conjugating_AS"/>
</dbReference>
<dbReference type="InterPro" id="IPR016135">
    <property type="entry name" value="UBQ-conjugating_enzyme/RWD"/>
</dbReference>
<dbReference type="PANTHER" id="PTHR24068">
    <property type="entry name" value="UBIQUITIN-CONJUGATING ENZYME E2"/>
    <property type="match status" value="1"/>
</dbReference>
<dbReference type="Pfam" id="PF00179">
    <property type="entry name" value="UQ_con"/>
    <property type="match status" value="1"/>
</dbReference>
<dbReference type="SMART" id="SM00212">
    <property type="entry name" value="UBCc"/>
    <property type="match status" value="1"/>
</dbReference>
<dbReference type="SUPFAM" id="SSF54495">
    <property type="entry name" value="UBC-like"/>
    <property type="match status" value="1"/>
</dbReference>
<dbReference type="PROSITE" id="PS00183">
    <property type="entry name" value="UBC_1"/>
    <property type="match status" value="1"/>
</dbReference>
<dbReference type="PROSITE" id="PS50127">
    <property type="entry name" value="UBC_2"/>
    <property type="match status" value="1"/>
</dbReference>
<sequence length="185" mass="21179">MSSPSKRREMDLMKLMMSDYKVEMINDGMQEFFVEFSGPKDSIYEGGVWKIRVELPDAYPYKSPSVGFITKIYHPNVDEMSGSVCLDVINQTWSPMFDLVNVFETFLPQLLLYPNPSDPLNGEAAALMMRDRPTYEQRVKEYCEKYAKPRADTEEMSSDDEMSEDEYASDGDDEDDVAIAGKLDP</sequence>
<proteinExistence type="evidence at transcript level"/>
<keyword id="KW-0067">ATP-binding</keyword>
<keyword id="KW-0547">Nucleotide-binding</keyword>
<keyword id="KW-1185">Reference proteome</keyword>
<keyword id="KW-0808">Transferase</keyword>
<keyword id="KW-0833">Ubl conjugation pathway</keyword>
<comment type="function">
    <text evidence="4">Accepts the ubiquitin from the E1 complex and catalyzes its covalent attachment to other proteins.</text>
</comment>
<comment type="catalytic activity">
    <reaction evidence="1 2">
        <text>S-ubiquitinyl-[E1 ubiquitin-activating enzyme]-L-cysteine + [E2 ubiquitin-conjugating enzyme]-L-cysteine = [E1 ubiquitin-activating enzyme]-L-cysteine + S-ubiquitinyl-[E2 ubiquitin-conjugating enzyme]-L-cysteine.</text>
        <dbReference type="EC" id="2.3.2.23"/>
    </reaction>
</comment>
<comment type="pathway">
    <text evidence="1">Protein modification; protein ubiquitination.</text>
</comment>
<comment type="tissue specificity">
    <text evidence="5">Expressed in developing ovules, but not in vascular tissues.</text>
</comment>
<comment type="induction">
    <text evidence="5">Not induced by heat shock.</text>
</comment>
<comment type="similarity">
    <text evidence="1">Belongs to the ubiquitin-conjugating enzyme family.</text>
</comment>
<organism>
    <name type="scientific">Arabidopsis thaliana</name>
    <name type="common">Mouse-ear cress</name>
    <dbReference type="NCBI Taxonomy" id="3702"/>
    <lineage>
        <taxon>Eukaryota</taxon>
        <taxon>Viridiplantae</taxon>
        <taxon>Streptophyta</taxon>
        <taxon>Embryophyta</taxon>
        <taxon>Tracheophyta</taxon>
        <taxon>Spermatophyta</taxon>
        <taxon>Magnoliopsida</taxon>
        <taxon>eudicotyledons</taxon>
        <taxon>Gunneridae</taxon>
        <taxon>Pentapetalae</taxon>
        <taxon>rosids</taxon>
        <taxon>malvids</taxon>
        <taxon>Brassicales</taxon>
        <taxon>Brassicaceae</taxon>
        <taxon>Camelineae</taxon>
        <taxon>Arabidopsis</taxon>
    </lineage>
</organism>